<name>CLN5_MOUSE</name>
<keyword id="KW-1015">Disulfide bond</keyword>
<keyword id="KW-0325">Glycoprotein</keyword>
<keyword id="KW-0378">Hydrolase</keyword>
<keyword id="KW-0458">Lysosome</keyword>
<keyword id="KW-0472">Membrane</keyword>
<keyword id="KW-0523">Neurodegeneration</keyword>
<keyword id="KW-0525">Neuronal ceroid lipofuscinosis</keyword>
<keyword id="KW-1185">Reference proteome</keyword>
<keyword id="KW-0735">Signal-anchor</keyword>
<keyword id="KW-0808">Transferase</keyword>
<keyword id="KW-0812">Transmembrane</keyword>
<keyword id="KW-1133">Transmembrane helix</keyword>
<gene>
    <name type="primary">Cln5</name>
    <name evidence="1" type="synonym">Bmps</name>
</gene>
<feature type="chain" id="PRO_0000330471" description="Bis(monoacylglycero)phosphate synthase CLN5">
    <location>
        <begin position="1"/>
        <end position="341"/>
    </location>
</feature>
<feature type="chain" id="PRO_0000438010" description="Bis(monoacylglycero)phosphate synthase CLN5, secreted form">
    <location>
        <begin position="27"/>
        <end position="341"/>
    </location>
</feature>
<feature type="topological domain" description="Cytoplasmic" evidence="1">
    <location>
        <begin position="1"/>
        <end position="13"/>
    </location>
</feature>
<feature type="transmembrane region" description="Helical; Signal-anchor for type II membrane protein" evidence="2">
    <location>
        <begin position="14"/>
        <end position="30"/>
    </location>
</feature>
<feature type="topological domain" description="Lumenal" evidence="1">
    <location>
        <begin position="31"/>
        <end position="341"/>
    </location>
</feature>
<feature type="region of interest" description="Membrane-anchoring" evidence="1">
    <location>
        <begin position="287"/>
        <end position="326"/>
    </location>
</feature>
<feature type="active site" description="Proton acceptor" evidence="1">
    <location>
        <position position="100"/>
    </location>
</feature>
<feature type="active site" description="Nucleophile; Acyl-thioester intermediate" evidence="1">
    <location>
        <position position="214"/>
    </location>
</feature>
<feature type="site" description="Cleavage; by SPPL3" evidence="1">
    <location>
        <begin position="26"/>
        <end position="27"/>
    </location>
</feature>
<feature type="glycosylation site" description="N-linked (GlcNAc...) asparagine" evidence="2">
    <location>
        <position position="113"/>
    </location>
</feature>
<feature type="glycosylation site" description="N-linked (GlcNAc...) asparagine" evidence="2">
    <location>
        <position position="126"/>
    </location>
</feature>
<feature type="glycosylation site" description="N-linked (GlcNAc...) asparagine" evidence="2">
    <location>
        <position position="161"/>
    </location>
</feature>
<feature type="glycosylation site" description="N-linked (GlcNAc...) asparagine" evidence="2">
    <location>
        <position position="186"/>
    </location>
</feature>
<feature type="glycosylation site" description="N-linked (GlcNAc...) asparagine" evidence="2">
    <location>
        <position position="238"/>
    </location>
</feature>
<feature type="glycosylation site" description="N-linked (GlcNAc...) asparagine" evidence="2">
    <location>
        <position position="254"/>
    </location>
</feature>
<feature type="glycosylation site" description="N-linked (GlcNAc...) asparagine" evidence="2">
    <location>
        <position position="264"/>
    </location>
</feature>
<feature type="disulfide bond" evidence="1">
    <location>
        <begin position="53"/>
        <end position="142"/>
    </location>
</feature>
<feature type="disulfide bond" evidence="1">
    <location>
        <begin position="60"/>
        <end position="148"/>
    </location>
</feature>
<feature type="sequence conflict" description="In Ref. 2; AAH25487." evidence="7" ref="2">
    <original>PCG</original>
    <variation>TRP</variation>
    <location>
        <begin position="6"/>
        <end position="8"/>
    </location>
</feature>
<feature type="sequence conflict" description="In Ref. 1; BAC27797." evidence="7" ref="1">
    <original>R</original>
    <variation>H</variation>
    <location>
        <position position="42"/>
    </location>
</feature>
<accession>Q3UMW8</accession>
<accession>Q8C054</accession>
<accession>Q8R152</accession>
<reference key="1">
    <citation type="journal article" date="2005" name="Science">
        <title>The transcriptional landscape of the mammalian genome.</title>
        <authorList>
            <person name="Carninci P."/>
            <person name="Kasukawa T."/>
            <person name="Katayama S."/>
            <person name="Gough J."/>
            <person name="Frith M.C."/>
            <person name="Maeda N."/>
            <person name="Oyama R."/>
            <person name="Ravasi T."/>
            <person name="Lenhard B."/>
            <person name="Wells C."/>
            <person name="Kodzius R."/>
            <person name="Shimokawa K."/>
            <person name="Bajic V.B."/>
            <person name="Brenner S.E."/>
            <person name="Batalov S."/>
            <person name="Forrest A.R."/>
            <person name="Zavolan M."/>
            <person name="Davis M.J."/>
            <person name="Wilming L.G."/>
            <person name="Aidinis V."/>
            <person name="Allen J.E."/>
            <person name="Ambesi-Impiombato A."/>
            <person name="Apweiler R."/>
            <person name="Aturaliya R.N."/>
            <person name="Bailey T.L."/>
            <person name="Bansal M."/>
            <person name="Baxter L."/>
            <person name="Beisel K.W."/>
            <person name="Bersano T."/>
            <person name="Bono H."/>
            <person name="Chalk A.M."/>
            <person name="Chiu K.P."/>
            <person name="Choudhary V."/>
            <person name="Christoffels A."/>
            <person name="Clutterbuck D.R."/>
            <person name="Crowe M.L."/>
            <person name="Dalla E."/>
            <person name="Dalrymple B.P."/>
            <person name="de Bono B."/>
            <person name="Della Gatta G."/>
            <person name="di Bernardo D."/>
            <person name="Down T."/>
            <person name="Engstrom P."/>
            <person name="Fagiolini M."/>
            <person name="Faulkner G."/>
            <person name="Fletcher C.F."/>
            <person name="Fukushima T."/>
            <person name="Furuno M."/>
            <person name="Futaki S."/>
            <person name="Gariboldi M."/>
            <person name="Georgii-Hemming P."/>
            <person name="Gingeras T.R."/>
            <person name="Gojobori T."/>
            <person name="Green R.E."/>
            <person name="Gustincich S."/>
            <person name="Harbers M."/>
            <person name="Hayashi Y."/>
            <person name="Hensch T.K."/>
            <person name="Hirokawa N."/>
            <person name="Hill D."/>
            <person name="Huminiecki L."/>
            <person name="Iacono M."/>
            <person name="Ikeo K."/>
            <person name="Iwama A."/>
            <person name="Ishikawa T."/>
            <person name="Jakt M."/>
            <person name="Kanapin A."/>
            <person name="Katoh M."/>
            <person name="Kawasawa Y."/>
            <person name="Kelso J."/>
            <person name="Kitamura H."/>
            <person name="Kitano H."/>
            <person name="Kollias G."/>
            <person name="Krishnan S.P."/>
            <person name="Kruger A."/>
            <person name="Kummerfeld S.K."/>
            <person name="Kurochkin I.V."/>
            <person name="Lareau L.F."/>
            <person name="Lazarevic D."/>
            <person name="Lipovich L."/>
            <person name="Liu J."/>
            <person name="Liuni S."/>
            <person name="McWilliam S."/>
            <person name="Madan Babu M."/>
            <person name="Madera M."/>
            <person name="Marchionni L."/>
            <person name="Matsuda H."/>
            <person name="Matsuzawa S."/>
            <person name="Miki H."/>
            <person name="Mignone F."/>
            <person name="Miyake S."/>
            <person name="Morris K."/>
            <person name="Mottagui-Tabar S."/>
            <person name="Mulder N."/>
            <person name="Nakano N."/>
            <person name="Nakauchi H."/>
            <person name="Ng P."/>
            <person name="Nilsson R."/>
            <person name="Nishiguchi S."/>
            <person name="Nishikawa S."/>
            <person name="Nori F."/>
            <person name="Ohara O."/>
            <person name="Okazaki Y."/>
            <person name="Orlando V."/>
            <person name="Pang K.C."/>
            <person name="Pavan W.J."/>
            <person name="Pavesi G."/>
            <person name="Pesole G."/>
            <person name="Petrovsky N."/>
            <person name="Piazza S."/>
            <person name="Reed J."/>
            <person name="Reid J.F."/>
            <person name="Ring B.Z."/>
            <person name="Ringwald M."/>
            <person name="Rost B."/>
            <person name="Ruan Y."/>
            <person name="Salzberg S.L."/>
            <person name="Sandelin A."/>
            <person name="Schneider C."/>
            <person name="Schoenbach C."/>
            <person name="Sekiguchi K."/>
            <person name="Semple C.A."/>
            <person name="Seno S."/>
            <person name="Sessa L."/>
            <person name="Sheng Y."/>
            <person name="Shibata Y."/>
            <person name="Shimada H."/>
            <person name="Shimada K."/>
            <person name="Silva D."/>
            <person name="Sinclair B."/>
            <person name="Sperling S."/>
            <person name="Stupka E."/>
            <person name="Sugiura K."/>
            <person name="Sultana R."/>
            <person name="Takenaka Y."/>
            <person name="Taki K."/>
            <person name="Tammoja K."/>
            <person name="Tan S.L."/>
            <person name="Tang S."/>
            <person name="Taylor M.S."/>
            <person name="Tegner J."/>
            <person name="Teichmann S.A."/>
            <person name="Ueda H.R."/>
            <person name="van Nimwegen E."/>
            <person name="Verardo R."/>
            <person name="Wei C.L."/>
            <person name="Yagi K."/>
            <person name="Yamanishi H."/>
            <person name="Zabarovsky E."/>
            <person name="Zhu S."/>
            <person name="Zimmer A."/>
            <person name="Hide W."/>
            <person name="Bult C."/>
            <person name="Grimmond S.M."/>
            <person name="Teasdale R.D."/>
            <person name="Liu E.T."/>
            <person name="Brusic V."/>
            <person name="Quackenbush J."/>
            <person name="Wahlestedt C."/>
            <person name="Mattick J.S."/>
            <person name="Hume D.A."/>
            <person name="Kai C."/>
            <person name="Sasaki D."/>
            <person name="Tomaru Y."/>
            <person name="Fukuda S."/>
            <person name="Kanamori-Katayama M."/>
            <person name="Suzuki M."/>
            <person name="Aoki J."/>
            <person name="Arakawa T."/>
            <person name="Iida J."/>
            <person name="Imamura K."/>
            <person name="Itoh M."/>
            <person name="Kato T."/>
            <person name="Kawaji H."/>
            <person name="Kawagashira N."/>
            <person name="Kawashima T."/>
            <person name="Kojima M."/>
            <person name="Kondo S."/>
            <person name="Konno H."/>
            <person name="Nakano K."/>
            <person name="Ninomiya N."/>
            <person name="Nishio T."/>
            <person name="Okada M."/>
            <person name="Plessy C."/>
            <person name="Shibata K."/>
            <person name="Shiraki T."/>
            <person name="Suzuki S."/>
            <person name="Tagami M."/>
            <person name="Waki K."/>
            <person name="Watahiki A."/>
            <person name="Okamura-Oho Y."/>
            <person name="Suzuki H."/>
            <person name="Kawai J."/>
            <person name="Hayashizaki Y."/>
        </authorList>
    </citation>
    <scope>NUCLEOTIDE SEQUENCE [LARGE SCALE MRNA]</scope>
    <source>
        <strain>C57BL/6J</strain>
        <tissue>Lung</tissue>
        <tissue>Olfactory bulb</tissue>
    </source>
</reference>
<reference key="2">
    <citation type="journal article" date="2004" name="Genome Res.">
        <title>The status, quality, and expansion of the NIH full-length cDNA project: the Mammalian Gene Collection (MGC).</title>
        <authorList>
            <consortium name="The MGC Project Team"/>
        </authorList>
    </citation>
    <scope>NUCLEOTIDE SEQUENCE [LARGE SCALE MRNA] OF 6-341</scope>
    <source>
        <strain>FVB/N</strain>
        <tissue>Mammary tumor</tissue>
    </source>
</reference>
<reference key="3">
    <citation type="journal article" date="2009" name="BMC Cell Biol.">
        <title>Novel interactions of CLN5 support molecular networking between neuronal ceroid lipofuscinosis proteins.</title>
        <authorList>
            <person name="Lyly A."/>
            <person name="von Schantz C."/>
            <person name="Heine C."/>
            <person name="Schmiedt M.L."/>
            <person name="Sipilae T."/>
            <person name="Jalanko A."/>
            <person name="Kyttaelae A."/>
        </authorList>
    </citation>
    <scope>INTERACTION WITH PPT1; TPP1; CLN3; CLN6; CLN8; ATP5F1A AND ATP5F1B</scope>
</reference>
<reference key="4">
    <citation type="journal article" date="2010" name="Hum. Mutat.">
        <title>The neuronal ceroid lipofuscinosis protein CLN5: new insights into cellular maturation, transport, and consequences of mutations.</title>
        <authorList>
            <person name="Schmiedt M.L."/>
            <person name="Bessa C."/>
            <person name="Heine C."/>
            <person name="Ribeiro M.G."/>
            <person name="Jalanko A."/>
            <person name="Kyttaelae A."/>
        </authorList>
    </citation>
    <scope>SUBCELLULAR LOCATION (SECRETED FORM)</scope>
</reference>
<reference key="5">
    <citation type="journal article" date="2015" name="Exp. Cell Res.">
        <title>Proteolytic processing of the neuronal ceroid lipofuscinosis related lysosomal protein CLN5.</title>
        <authorList>
            <person name="De Silva B."/>
            <person name="Adams J."/>
            <person name="Lee S.Y."/>
        </authorList>
    </citation>
    <scope>PROTEOLYTIC CLEAVAGE AT C-TERMINUS</scope>
    <scope>TISSUE SPECIFICITY</scope>
</reference>
<reference key="6">
    <citation type="journal article" date="2022" name="Sci. Adv.">
        <title>Cln5 represents a new type of cysteine-based S-depalmitoylase linked to neurodegeneration.</title>
        <authorList>
            <person name="Luebben A.V."/>
            <person name="Bender D."/>
            <person name="Becker S."/>
            <person name="Crowther L.M."/>
            <person name="Erven I."/>
            <person name="Hofmann K."/>
            <person name="Soeding J."/>
            <person name="Klemp H."/>
            <person name="Bellotti C."/>
            <person name="Staeuble A."/>
            <person name="Qiu T."/>
            <person name="Kathayat R.S."/>
            <person name="Dickinson B.C."/>
            <person name="Gaertner J."/>
            <person name="Sheldrick G.M."/>
            <person name="Kraetzner R."/>
            <person name="Steinfeld R."/>
        </authorList>
    </citation>
    <scope>FUNCTION</scope>
    <scope>CATALYTIC ACTIVITY</scope>
</reference>
<proteinExistence type="evidence at protein level"/>
<dbReference type="EC" id="2.3.1.-" evidence="1"/>
<dbReference type="EC" id="3.1.2.22" evidence="6"/>
<dbReference type="EMBL" id="AK032293">
    <property type="protein sequence ID" value="BAC27797.1"/>
    <property type="molecule type" value="mRNA"/>
</dbReference>
<dbReference type="EMBL" id="AK144635">
    <property type="protein sequence ID" value="BAE25980.1"/>
    <property type="molecule type" value="mRNA"/>
</dbReference>
<dbReference type="EMBL" id="BC025487">
    <property type="protein sequence ID" value="AAH25487.1"/>
    <property type="molecule type" value="mRNA"/>
</dbReference>
<dbReference type="CCDS" id="CCDS27314.1"/>
<dbReference type="RefSeq" id="NP_001028414.1">
    <property type="nucleotide sequence ID" value="NM_001033242.2"/>
</dbReference>
<dbReference type="SMR" id="Q3UMW8"/>
<dbReference type="FunCoup" id="Q3UMW8">
    <property type="interactions" value="1375"/>
</dbReference>
<dbReference type="STRING" id="10090.ENSMUSP00000022721"/>
<dbReference type="GlyConnect" id="2208">
    <property type="glycosylation" value="1 N-Linked glycan (1 site)"/>
</dbReference>
<dbReference type="GlyCosmos" id="Q3UMW8">
    <property type="glycosylation" value="7 sites, 1 glycan"/>
</dbReference>
<dbReference type="GlyGen" id="Q3UMW8">
    <property type="glycosylation" value="8 sites, 4 N-linked glycans (3 sites)"/>
</dbReference>
<dbReference type="iPTMnet" id="Q3UMW8"/>
<dbReference type="PhosphoSitePlus" id="Q3UMW8"/>
<dbReference type="SwissPalm" id="Q3UMW8"/>
<dbReference type="PaxDb" id="10090-ENSMUSP00000022721"/>
<dbReference type="ProteomicsDB" id="281645"/>
<dbReference type="Pumba" id="Q3UMW8"/>
<dbReference type="Ensembl" id="ENSMUST00000022721.8">
    <property type="protein sequence ID" value="ENSMUSP00000022721.7"/>
    <property type="gene ID" value="ENSMUSG00000022125.8"/>
</dbReference>
<dbReference type="GeneID" id="211286"/>
<dbReference type="KEGG" id="mmu:211286"/>
<dbReference type="UCSC" id="uc007uwg.1">
    <property type="organism name" value="mouse"/>
</dbReference>
<dbReference type="AGR" id="MGI:2442253"/>
<dbReference type="CTD" id="1203"/>
<dbReference type="MGI" id="MGI:2442253">
    <property type="gene designation" value="Cln5"/>
</dbReference>
<dbReference type="VEuPathDB" id="HostDB:ENSMUSG00000022125"/>
<dbReference type="eggNOG" id="ENOG502QPQ5">
    <property type="taxonomic scope" value="Eukaryota"/>
</dbReference>
<dbReference type="GeneTree" id="ENSGT00390000010065"/>
<dbReference type="HOGENOM" id="CLU_050387_0_0_1"/>
<dbReference type="InParanoid" id="Q3UMW8"/>
<dbReference type="OMA" id="FRPHQSF"/>
<dbReference type="OrthoDB" id="10005881at2759"/>
<dbReference type="PhylomeDB" id="Q3UMW8"/>
<dbReference type="TreeFam" id="TF330864"/>
<dbReference type="BioGRID-ORCS" id="211286">
    <property type="hits" value="1 hit in 78 CRISPR screens"/>
</dbReference>
<dbReference type="ChiTaRS" id="Cln5">
    <property type="organism name" value="mouse"/>
</dbReference>
<dbReference type="PRO" id="PR:Q3UMW8"/>
<dbReference type="Proteomes" id="UP000000589">
    <property type="component" value="Chromosome 14"/>
</dbReference>
<dbReference type="RNAct" id="Q3UMW8">
    <property type="molecule type" value="protein"/>
</dbReference>
<dbReference type="Bgee" id="ENSMUSG00000022125">
    <property type="expression patterns" value="Expressed in placenta labyrinth and 254 other cell types or tissues"/>
</dbReference>
<dbReference type="ExpressionAtlas" id="Q3UMW8">
    <property type="expression patterns" value="baseline and differential"/>
</dbReference>
<dbReference type="GO" id="GO:0005829">
    <property type="term" value="C:cytosol"/>
    <property type="evidence" value="ECO:0007669"/>
    <property type="project" value="GOC"/>
</dbReference>
<dbReference type="GO" id="GO:0005783">
    <property type="term" value="C:endoplasmic reticulum"/>
    <property type="evidence" value="ECO:0000250"/>
    <property type="project" value="UniProtKB"/>
</dbReference>
<dbReference type="GO" id="GO:0005794">
    <property type="term" value="C:Golgi apparatus"/>
    <property type="evidence" value="ECO:0000250"/>
    <property type="project" value="UniProtKB"/>
</dbReference>
<dbReference type="GO" id="GO:0005765">
    <property type="term" value="C:lysosomal membrane"/>
    <property type="evidence" value="ECO:0000250"/>
    <property type="project" value="UniProtKB"/>
</dbReference>
<dbReference type="GO" id="GO:0005764">
    <property type="term" value="C:lysosome"/>
    <property type="evidence" value="ECO:0000314"/>
    <property type="project" value="UniProtKB"/>
</dbReference>
<dbReference type="GO" id="GO:0016020">
    <property type="term" value="C:membrane"/>
    <property type="evidence" value="ECO:0000250"/>
    <property type="project" value="UniProtKB"/>
</dbReference>
<dbReference type="GO" id="GO:0048471">
    <property type="term" value="C:perinuclear region of cytoplasm"/>
    <property type="evidence" value="ECO:0000250"/>
    <property type="project" value="UniProtKB"/>
</dbReference>
<dbReference type="GO" id="GO:0005775">
    <property type="term" value="C:vacuolar lumen"/>
    <property type="evidence" value="ECO:0000314"/>
    <property type="project" value="MGI"/>
</dbReference>
<dbReference type="GO" id="GO:0160121">
    <property type="term" value="F:bis(monoacylglycero)phosphate synthase activity"/>
    <property type="evidence" value="ECO:0000250"/>
    <property type="project" value="UniProtKB"/>
</dbReference>
<dbReference type="GO" id="GO:0005537">
    <property type="term" value="F:D-mannose binding"/>
    <property type="evidence" value="ECO:0000250"/>
    <property type="project" value="UniProtKB"/>
</dbReference>
<dbReference type="GO" id="GO:0052816">
    <property type="term" value="F:long-chain fatty acyl-CoA hydrolase activity"/>
    <property type="evidence" value="ECO:0000314"/>
    <property type="project" value="UniProtKB"/>
</dbReference>
<dbReference type="GO" id="GO:0007420">
    <property type="term" value="P:brain development"/>
    <property type="evidence" value="ECO:0000250"/>
    <property type="project" value="UniProtKB"/>
</dbReference>
<dbReference type="GO" id="GO:0070085">
    <property type="term" value="P:glycosylation"/>
    <property type="evidence" value="ECO:0000250"/>
    <property type="project" value="UniProtKB"/>
</dbReference>
<dbReference type="GO" id="GO:0007042">
    <property type="term" value="P:lysosomal lumen acidification"/>
    <property type="evidence" value="ECO:0000250"/>
    <property type="project" value="UniProtKB"/>
</dbReference>
<dbReference type="GO" id="GO:0007040">
    <property type="term" value="P:lysosome organization"/>
    <property type="evidence" value="ECO:0000315"/>
    <property type="project" value="MGI"/>
</dbReference>
<dbReference type="GO" id="GO:0022008">
    <property type="term" value="P:neurogenesis"/>
    <property type="evidence" value="ECO:0000250"/>
    <property type="project" value="UniProtKB"/>
</dbReference>
<dbReference type="GO" id="GO:0042147">
    <property type="term" value="P:retrograde transport, endosome to Golgi"/>
    <property type="evidence" value="ECO:0007669"/>
    <property type="project" value="Ensembl"/>
</dbReference>
<dbReference type="GO" id="GO:0006465">
    <property type="term" value="P:signal peptide processing"/>
    <property type="evidence" value="ECO:0000250"/>
    <property type="project" value="UniProtKB"/>
</dbReference>
<dbReference type="GO" id="GO:0007601">
    <property type="term" value="P:visual perception"/>
    <property type="evidence" value="ECO:0000315"/>
    <property type="project" value="MGI"/>
</dbReference>
<dbReference type="InterPro" id="IPR026138">
    <property type="entry name" value="CLN5"/>
</dbReference>
<dbReference type="PANTHER" id="PTHR15380:SF2">
    <property type="entry name" value="CEROID-LIPOFUSCINOSIS NEURONAL PROTEIN 5"/>
    <property type="match status" value="1"/>
</dbReference>
<dbReference type="PANTHER" id="PTHR15380">
    <property type="entry name" value="CEROID-LIPOFUSCINOSIS, NEURONAL 5"/>
    <property type="match status" value="1"/>
</dbReference>
<dbReference type="Pfam" id="PF15014">
    <property type="entry name" value="CLN5"/>
    <property type="match status" value="1"/>
</dbReference>
<sequence length="341" mass="39329">MLRGGPCGAHWRPALALALLGLATILGASPTSGQRWPVPYKRFSFRPKTDPYCQAKYTFCPTGSPIPVMKDNDVIEVLRLQAPIWEFKYGDLLGHFKLMHDAVGFRSTLTGKNYTIEWYELFQLGNCTFPHLRPDKSAPFWCNQGAACFFEGIDDKHWKENGTLSVVATISGNTFNKVAEWVKQDNETGIYYETWTVRAGPGQGAQTWFESYDCSNFVLRTYKKLAEFGTEFKKIETNYTKIFLYSGEPIYLGNETSIFGPKGNKTLALAIKKFYGPFRPYLSTKDFLMNFLKIFDTVIIHRQFYLFYNFEYWFLPMKPPFVKITYEETPLPTRHTTFTDL</sequence>
<protein>
    <recommendedName>
        <fullName evidence="1">Bis(monoacylglycero)phosphate synthase CLN5</fullName>
        <shortName>BMP synthase CLN5</shortName>
        <ecNumber evidence="1">2.3.1.-</ecNumber>
    </recommendedName>
    <alternativeName>
        <fullName>Ceroid-lipofuscinosis neuronal protein 5</fullName>
        <shortName>Protein CLN5</shortName>
    </alternativeName>
    <alternativeName>
        <fullName>Palmitoyl protein thioesterase CLN5</fullName>
        <ecNumber evidence="6">3.1.2.22</ecNumber>
    </alternativeName>
    <alternativeName>
        <fullName>S-depalmitoylase CLN5</fullName>
    </alternativeName>
    <component>
        <recommendedName>
            <fullName>Bis(monoacylglycero)phosphate synthase CLN5, secreted form</fullName>
        </recommendedName>
    </component>
</protein>
<organism>
    <name type="scientific">Mus musculus</name>
    <name type="common">Mouse</name>
    <dbReference type="NCBI Taxonomy" id="10090"/>
    <lineage>
        <taxon>Eukaryota</taxon>
        <taxon>Metazoa</taxon>
        <taxon>Chordata</taxon>
        <taxon>Craniata</taxon>
        <taxon>Vertebrata</taxon>
        <taxon>Euteleostomi</taxon>
        <taxon>Mammalia</taxon>
        <taxon>Eutheria</taxon>
        <taxon>Euarchontoglires</taxon>
        <taxon>Glires</taxon>
        <taxon>Rodentia</taxon>
        <taxon>Myomorpha</taxon>
        <taxon>Muroidea</taxon>
        <taxon>Muridae</taxon>
        <taxon>Murinae</taxon>
        <taxon>Mus</taxon>
        <taxon>Mus</taxon>
    </lineage>
</organism>
<comment type="function">
    <molecule>Bis(monoacylglycero)phosphate synthase CLN5, secreted form</molecule>
    <text evidence="1">Catalyzes the synthesis of bis(monoacylglycero)phosphate (BMP) via transacylation of 2 molecules of lysophosphatidylglycerol (LPG). BMP also known as lysobisphosphatidic acid plays a key role in the formation of intraluminal vesicles and in maintaining intracellular cholesterol homeostasis. Can use only LPG as the exclusive lysophospholipid acyl donor for base exchange and displays BMP synthase activity towards various LPGs (LPG 14:0, LPG 16:0, LPG 18:0, LPG 18:1) with a higher preference for longer chain lengths. Plays a role in influencing the retrograde trafficking of lysosomal sorting receptors SORT1 and IGF2R from the endosomes to the trans-Golgi network by controlling the recruitment of retromer complex to the endosomal membrane. Regulates the localization and activation of RAB7A which is required to recruit the retromer complex to the endosomal membrane.</text>
</comment>
<comment type="function">
    <text evidence="6">Exhibits palmitoyl protein thioesterase (S-depalmitoylation) activity in vitro and most likely plays a role in protein S-depalmitoylation.</text>
</comment>
<comment type="catalytic activity">
    <reaction evidence="6">
        <text>S-hexadecanoyl-L-cysteinyl-[protein] + H2O = L-cysteinyl-[protein] + hexadecanoate + H(+)</text>
        <dbReference type="Rhea" id="RHEA:19233"/>
        <dbReference type="Rhea" id="RHEA-COMP:10131"/>
        <dbReference type="Rhea" id="RHEA-COMP:11032"/>
        <dbReference type="ChEBI" id="CHEBI:7896"/>
        <dbReference type="ChEBI" id="CHEBI:15377"/>
        <dbReference type="ChEBI" id="CHEBI:15378"/>
        <dbReference type="ChEBI" id="CHEBI:29950"/>
        <dbReference type="ChEBI" id="CHEBI:74151"/>
        <dbReference type="EC" id="3.1.2.22"/>
    </reaction>
    <physiologicalReaction direction="left-to-right" evidence="8">
        <dbReference type="Rhea" id="RHEA:19234"/>
    </physiologicalReaction>
</comment>
<comment type="catalytic activity">
    <molecule>Bis(monoacylglycero)phosphate synthase CLN5, secreted form</molecule>
    <reaction evidence="1">
        <text>2 1-acyl-sn-glycero-3-phospho-(1'-sn-glycerol) = 1-acyl-sn-glycero-3-phospho-(3'-acyl-sn-1'-glycerol) + sn-glycero-3-phospho-(1'-sn-glycerol)</text>
        <dbReference type="Rhea" id="RHEA:77619"/>
        <dbReference type="ChEBI" id="CHEBI:64717"/>
        <dbReference type="ChEBI" id="CHEBI:64840"/>
        <dbReference type="ChEBI" id="CHEBI:232628"/>
    </reaction>
    <physiologicalReaction direction="left-to-right" evidence="1">
        <dbReference type="Rhea" id="RHEA:77620"/>
    </physiologicalReaction>
</comment>
<comment type="catalytic activity">
    <molecule>Bis(monoacylglycero)phosphate synthase CLN5, secreted form</molecule>
    <reaction evidence="1">
        <text>2 1-(9Z-octadecenoyl)-sn-glycero-3-phospho-(1'-sn-glycerol) = 1-(9Z-octadecenoyl)-sn-glycero-3-phospho-(3'-(9Z-octadecenoyl)-1'-sn-glycerol) + sn-glycero-3-phospho-(1'-sn-glycerol)</text>
        <dbReference type="Rhea" id="RHEA:77599"/>
        <dbReference type="ChEBI" id="CHEBI:64717"/>
        <dbReference type="ChEBI" id="CHEBI:72828"/>
        <dbReference type="ChEBI" id="CHEBI:232637"/>
    </reaction>
    <physiologicalReaction direction="left-to-right" evidence="1">
        <dbReference type="Rhea" id="RHEA:77600"/>
    </physiologicalReaction>
</comment>
<comment type="catalytic activity">
    <molecule>Bis(monoacylglycero)phosphate synthase CLN5, secreted form</molecule>
    <reaction evidence="1">
        <text>2 1-octadecanoyl-sn-glycero-3-phospho-(1'-sn-glycerol) = 1-octadecanoyl-sn-glycero-3-phospho-(3'-octadecanoyl-1'-sn-glycerol) + sn-glycero-3-phospho-(1'-sn-glycerol)</text>
        <dbReference type="Rhea" id="RHEA:77603"/>
        <dbReference type="ChEBI" id="CHEBI:64717"/>
        <dbReference type="ChEBI" id="CHEBI:72827"/>
        <dbReference type="ChEBI" id="CHEBI:232638"/>
    </reaction>
    <physiologicalReaction direction="left-to-right" evidence="1">
        <dbReference type="Rhea" id="RHEA:77604"/>
    </physiologicalReaction>
</comment>
<comment type="catalytic activity">
    <molecule>Bis(monoacylglycero)phosphate synthase CLN5, secreted form</molecule>
    <reaction evidence="1">
        <text>2 1-hexadecanoyl-sn-glycero-3-phospho-(1'-sn-glycerol) = 1-hexadecanoyl-sn-glycero-3-phospho-(3'-hexadecanoyl-1'-sn-glycerol) + sn-glycero-3-phospho-(1'-sn-glycerol)</text>
        <dbReference type="Rhea" id="RHEA:77607"/>
        <dbReference type="ChEBI" id="CHEBI:64717"/>
        <dbReference type="ChEBI" id="CHEBI:75158"/>
        <dbReference type="ChEBI" id="CHEBI:232639"/>
    </reaction>
    <physiologicalReaction direction="left-to-right" evidence="1">
        <dbReference type="Rhea" id="RHEA:77608"/>
    </physiologicalReaction>
</comment>
<comment type="catalytic activity">
    <molecule>Bis(monoacylglycero)phosphate synthase CLN5, secreted form</molecule>
    <reaction evidence="1">
        <text>2 1-tetradecanoyl-sn-glycero-3-phospho-(1'-sn-glycerol) = 1-tetradecanoyl-sn-glycero-3-phospho-(3'-tetradecanoyl-1'-sn-glycerol) + sn-glycero-3-phospho-(1'-sn-glycerol)</text>
        <dbReference type="Rhea" id="RHEA:77611"/>
        <dbReference type="ChEBI" id="CHEBI:64717"/>
        <dbReference type="ChEBI" id="CHEBI:72826"/>
        <dbReference type="ChEBI" id="CHEBI:232640"/>
    </reaction>
    <physiologicalReaction direction="left-to-right" evidence="1">
        <dbReference type="Rhea" id="RHEA:77612"/>
    </physiologicalReaction>
</comment>
<comment type="subunit">
    <text evidence="1 3">Multimer (By similarity). Interacts with PPT1, TPP1, CLN3, CLN6, CLN8, ATP5F1A and ATP5F1B (PubMed:19941651). Interacts with SORT1, RAB5A and RAB7A (By similarity).</text>
</comment>
<comment type="subcellular location">
    <molecule>Bis(monoacylglycero)phosphate synthase CLN5, secreted form</molecule>
    <subcellularLocation>
        <location evidence="4">Lysosome</location>
    </subcellularLocation>
</comment>
<comment type="subcellular location">
    <molecule>Bis(monoacylglycero)phosphate synthase CLN5</molecule>
    <subcellularLocation>
        <location evidence="1">Membrane</location>
        <topology evidence="1">Single-pass type II membrane protein</topology>
    </subcellularLocation>
    <text evidence="1">An amphipathic anchor region facilitates its association with the membrane.</text>
</comment>
<comment type="tissue specificity">
    <text evidence="5">Heart, kidney, liver, spleen, muscle and rectum (at protein level).</text>
</comment>
<comment type="PTM">
    <text evidence="1">N-glycosylated with both high mannose and complex type sugars. Glycosylation is important for proper folding and trafficking to the lysosomes.</text>
</comment>
<comment type="PTM">
    <molecule>Bis(monoacylglycero)phosphate synthase CLN5</molecule>
    <text evidence="1">The type II membrane signal anchor is proteolytically cleaved to produce a mature form that is transported to the lysosomes (Bis(monoacylglycero)phosphate synthase CLN5, secreted form).</text>
</comment>
<comment type="PTM">
    <text evidence="5">Can undergo proteolytic cleavage at the C-terminus, probably by a cysteine protease and may involve the removal of approximately 10-15 residues from the C-terminal end (PubMed:26342652).</text>
</comment>
<comment type="similarity">
    <text evidence="7">Belongs to the CLN5 family.</text>
</comment>
<evidence type="ECO:0000250" key="1">
    <source>
        <dbReference type="UniProtKB" id="O75503"/>
    </source>
</evidence>
<evidence type="ECO:0000255" key="2"/>
<evidence type="ECO:0000269" key="3">
    <source>
    </source>
</evidence>
<evidence type="ECO:0000269" key="4">
    <source>
    </source>
</evidence>
<evidence type="ECO:0000269" key="5">
    <source>
    </source>
</evidence>
<evidence type="ECO:0000269" key="6">
    <source>
    </source>
</evidence>
<evidence type="ECO:0000305" key="7"/>
<evidence type="ECO:0000305" key="8">
    <source>
    </source>
</evidence>